<comment type="function">
    <text evidence="1">Sequence-specific transcription factor which is part of a developmental regulatory system that provides cells with specific positional identities on the anterior-posterior axis.</text>
</comment>
<comment type="subcellular location">
    <subcellularLocation>
        <location evidence="2">Nucleus</location>
    </subcellularLocation>
</comment>
<comment type="developmental stage">
    <text evidence="4">At the 10-somite stage, expressed in the paraxial mesoderm with an anterior expression limit at somite 8. At the 20-somite stage, expressed in the developing CNS with an anterior expression limit adjacent to the somite 7/8 boundary.</text>
</comment>
<comment type="similarity">
    <text evidence="5">Belongs to the Abd-B homeobox family.</text>
</comment>
<proteinExistence type="evidence at transcript level"/>
<sequence>MSATGPISNYYVDSLINHESEDVLASRFTATGPISSSSRPTPLVPECADYPSCSFAPKPPVFTTSWAPVHSQSSVVYHPYTHQPHLGTDSRYVRSWLEPIPGTVSFPGYAGNSRHYGLKPDTFQDPRAGDCLGSNGRTYTDYLYCSAVDIREKQQNTPSPETESLSSGKHKDDKAELDPNNPVANWIHARSTRKKRCPYTKYQTLELEKEFLFNMYLTRDRRYEVARVLNLTERQVKIWFQNRRMKMKKMNKEKNDSKEQ</sequence>
<dbReference type="EMBL" id="AF071267">
    <property type="protein sequence ID" value="AAD15960.1"/>
    <property type="molecule type" value="Genomic_DNA"/>
</dbReference>
<dbReference type="EMBL" id="BC095014">
    <property type="protein sequence ID" value="AAH95014.1"/>
    <property type="molecule type" value="mRNA"/>
</dbReference>
<dbReference type="EMBL" id="DQ060556">
    <property type="protein sequence ID" value="AAY67934.1"/>
    <property type="molecule type" value="mRNA"/>
</dbReference>
<dbReference type="EMBL" id="Y14540">
    <property type="protein sequence ID" value="CAA74875.1"/>
    <property type="molecule type" value="mRNA"/>
</dbReference>
<dbReference type="SMR" id="Q9YGS6"/>
<dbReference type="FunCoup" id="Q9YGS6">
    <property type="interactions" value="145"/>
</dbReference>
<dbReference type="STRING" id="7955.ENSDARP00000105244"/>
<dbReference type="PaxDb" id="7955-ENSDARP00000105244"/>
<dbReference type="AGR" id="ZFIN:ZDB-GENE-000328-5"/>
<dbReference type="ZFIN" id="ZDB-GENE-000328-5">
    <property type="gene designation" value="hoxc9a"/>
</dbReference>
<dbReference type="eggNOG" id="KOG0487">
    <property type="taxonomic scope" value="Eukaryota"/>
</dbReference>
<dbReference type="InParanoid" id="Q9YGS6"/>
<dbReference type="PhylomeDB" id="Q9YGS6"/>
<dbReference type="PRO" id="PR:Q9YGS6"/>
<dbReference type="Proteomes" id="UP000000437">
    <property type="component" value="Unplaced"/>
</dbReference>
<dbReference type="GO" id="GO:0005634">
    <property type="term" value="C:nucleus"/>
    <property type="evidence" value="ECO:0000318"/>
    <property type="project" value="GO_Central"/>
</dbReference>
<dbReference type="GO" id="GO:0003700">
    <property type="term" value="F:DNA-binding transcription factor activity"/>
    <property type="evidence" value="ECO:0000318"/>
    <property type="project" value="GO_Central"/>
</dbReference>
<dbReference type="GO" id="GO:0000981">
    <property type="term" value="F:DNA-binding transcription factor activity, RNA polymerase II-specific"/>
    <property type="evidence" value="ECO:0007669"/>
    <property type="project" value="InterPro"/>
</dbReference>
<dbReference type="GO" id="GO:0000978">
    <property type="term" value="F:RNA polymerase II cis-regulatory region sequence-specific DNA binding"/>
    <property type="evidence" value="ECO:0000318"/>
    <property type="project" value="GO_Central"/>
</dbReference>
<dbReference type="GO" id="GO:0009952">
    <property type="term" value="P:anterior/posterior pattern specification"/>
    <property type="evidence" value="ECO:0000318"/>
    <property type="project" value="GO_Central"/>
</dbReference>
<dbReference type="GO" id="GO:0006351">
    <property type="term" value="P:DNA-templated transcription"/>
    <property type="evidence" value="ECO:0007669"/>
    <property type="project" value="InterPro"/>
</dbReference>
<dbReference type="GO" id="GO:0048704">
    <property type="term" value="P:embryonic skeletal system morphogenesis"/>
    <property type="evidence" value="ECO:0000318"/>
    <property type="project" value="GO_Central"/>
</dbReference>
<dbReference type="GO" id="GO:2001213">
    <property type="term" value="P:negative regulation of vasculogenesis"/>
    <property type="evidence" value="ECO:0000316"/>
    <property type="project" value="ZFIN"/>
</dbReference>
<dbReference type="GO" id="GO:1901492">
    <property type="term" value="P:positive regulation of lymphangiogenesis"/>
    <property type="evidence" value="ECO:0000315"/>
    <property type="project" value="ZFIN"/>
</dbReference>
<dbReference type="GO" id="GO:0009954">
    <property type="term" value="P:proximal/distal pattern formation"/>
    <property type="evidence" value="ECO:0000318"/>
    <property type="project" value="GO_Central"/>
</dbReference>
<dbReference type="GO" id="GO:0006357">
    <property type="term" value="P:regulation of transcription by RNA polymerase II"/>
    <property type="evidence" value="ECO:0000318"/>
    <property type="project" value="GO_Central"/>
</dbReference>
<dbReference type="CDD" id="cd00086">
    <property type="entry name" value="homeodomain"/>
    <property type="match status" value="1"/>
</dbReference>
<dbReference type="FunFam" id="1.10.10.60:FF:000018">
    <property type="entry name" value="Homeobox A10"/>
    <property type="match status" value="1"/>
</dbReference>
<dbReference type="Gene3D" id="1.10.10.60">
    <property type="entry name" value="Homeodomain-like"/>
    <property type="match status" value="1"/>
</dbReference>
<dbReference type="InterPro" id="IPR050803">
    <property type="entry name" value="Abd-B_homeobox_TF"/>
</dbReference>
<dbReference type="InterPro" id="IPR001356">
    <property type="entry name" value="HD"/>
</dbReference>
<dbReference type="InterPro" id="IPR020479">
    <property type="entry name" value="HD_metazoa"/>
</dbReference>
<dbReference type="InterPro" id="IPR017970">
    <property type="entry name" value="Homeobox_CS"/>
</dbReference>
<dbReference type="InterPro" id="IPR009057">
    <property type="entry name" value="Homeodomain-like_sf"/>
</dbReference>
<dbReference type="InterPro" id="IPR006711">
    <property type="entry name" value="Hox9_activation_N"/>
</dbReference>
<dbReference type="InterPro" id="IPR017112">
    <property type="entry name" value="HXA9/HXB9/HXC9"/>
</dbReference>
<dbReference type="PANTHER" id="PTHR45970">
    <property type="entry name" value="AGAP004664-PA"/>
    <property type="match status" value="1"/>
</dbReference>
<dbReference type="PANTHER" id="PTHR45970:SF1">
    <property type="entry name" value="HOMEOBOX PROTEIN HOX-C9"/>
    <property type="match status" value="1"/>
</dbReference>
<dbReference type="Pfam" id="PF00046">
    <property type="entry name" value="Homeodomain"/>
    <property type="match status" value="1"/>
</dbReference>
<dbReference type="Pfam" id="PF04617">
    <property type="entry name" value="Hox9_act"/>
    <property type="match status" value="1"/>
</dbReference>
<dbReference type="PIRSF" id="PIRSF037109">
    <property type="entry name" value="Homeobox_Hox9"/>
    <property type="match status" value="1"/>
</dbReference>
<dbReference type="PRINTS" id="PR00024">
    <property type="entry name" value="HOMEOBOX"/>
</dbReference>
<dbReference type="SMART" id="SM00389">
    <property type="entry name" value="HOX"/>
    <property type="match status" value="1"/>
</dbReference>
<dbReference type="SUPFAM" id="SSF46689">
    <property type="entry name" value="Homeodomain-like"/>
    <property type="match status" value="1"/>
</dbReference>
<dbReference type="PROSITE" id="PS00027">
    <property type="entry name" value="HOMEOBOX_1"/>
    <property type="match status" value="1"/>
</dbReference>
<dbReference type="PROSITE" id="PS50071">
    <property type="entry name" value="HOMEOBOX_2"/>
    <property type="match status" value="1"/>
</dbReference>
<feature type="chain" id="PRO_0000200187" description="Homeobox protein Hox-C9a">
    <location>
        <begin position="1"/>
        <end position="260"/>
    </location>
</feature>
<feature type="DNA-binding region" description="Homeobox" evidence="2">
    <location>
        <begin position="192"/>
        <end position="251"/>
    </location>
</feature>
<feature type="region of interest" description="Disordered" evidence="3">
    <location>
        <begin position="153"/>
        <end position="181"/>
    </location>
</feature>
<feature type="compositionally biased region" description="Polar residues" evidence="3">
    <location>
        <begin position="155"/>
        <end position="167"/>
    </location>
</feature>
<feature type="sequence conflict" description="In Ref. 1; AAD15960." evidence="5" ref="1">
    <original>P</original>
    <variation>R</variation>
    <location>
        <position position="40"/>
    </location>
</feature>
<feature type="sequence conflict" description="In Ref. 4; CAA74875." evidence="5" ref="4">
    <original>K</original>
    <variation>N</variation>
    <location>
        <position position="248"/>
    </location>
</feature>
<protein>
    <recommendedName>
        <fullName>Homeobox protein Hox-C9a</fullName>
        <shortName>Hox-C9</shortName>
    </recommendedName>
</protein>
<gene>
    <name type="primary">hoxc9a</name>
    <name type="synonym">hoxc9</name>
    <name type="ORF">zgc:109844</name>
</gene>
<organism>
    <name type="scientific">Danio rerio</name>
    <name type="common">Zebrafish</name>
    <name type="synonym">Brachydanio rerio</name>
    <dbReference type="NCBI Taxonomy" id="7955"/>
    <lineage>
        <taxon>Eukaryota</taxon>
        <taxon>Metazoa</taxon>
        <taxon>Chordata</taxon>
        <taxon>Craniata</taxon>
        <taxon>Vertebrata</taxon>
        <taxon>Euteleostomi</taxon>
        <taxon>Actinopterygii</taxon>
        <taxon>Neopterygii</taxon>
        <taxon>Teleostei</taxon>
        <taxon>Ostariophysi</taxon>
        <taxon>Cypriniformes</taxon>
        <taxon>Danionidae</taxon>
        <taxon>Danioninae</taxon>
        <taxon>Danio</taxon>
    </lineage>
</organism>
<accession>Q9YGS6</accession>
<accession>O57370</accession>
<accession>Q4PR87</accession>
<accession>Q4VBV5</accession>
<keyword id="KW-0217">Developmental protein</keyword>
<keyword id="KW-0238">DNA-binding</keyword>
<keyword id="KW-0371">Homeobox</keyword>
<keyword id="KW-0539">Nucleus</keyword>
<keyword id="KW-1185">Reference proteome</keyword>
<keyword id="KW-0804">Transcription</keyword>
<keyword id="KW-0805">Transcription regulation</keyword>
<name>HXC9A_DANRE</name>
<reference key="1">
    <citation type="journal article" date="1998" name="Science">
        <title>Zebrafish hox clusters and vertebrate genome evolution.</title>
        <authorList>
            <person name="Amores A."/>
            <person name="Force A."/>
            <person name="Yan Y.-L."/>
            <person name="Joly L."/>
            <person name="Amemiya C."/>
            <person name="Fritz A."/>
            <person name="Ho R.K."/>
            <person name="Langeland J."/>
            <person name="Prince V.E."/>
            <person name="Wang Y.-L."/>
            <person name="Westerfield M."/>
            <person name="Ekker M."/>
            <person name="Postlethwait J.H."/>
        </authorList>
    </citation>
    <scope>NUCLEOTIDE SEQUENCE [GENOMIC DNA]</scope>
</reference>
<reference key="2">
    <citation type="submission" date="2005-05" db="EMBL/GenBank/DDBJ databases">
        <authorList>
            <consortium name="NIH - Zebrafish Gene Collection (ZGC) project"/>
        </authorList>
    </citation>
    <scope>NUCLEOTIDE SEQUENCE [LARGE SCALE MRNA]</scope>
    <source>
        <tissue>Larva</tissue>
    </source>
</reference>
<reference key="3">
    <citation type="journal article" date="2005" name="Evol. Dev.">
        <title>Genomic annotation and transcriptome analysis of the zebrafish (Danio rerio) hox complex with description of a novel member, hoxb13a.</title>
        <authorList>
            <person name="Corredor-Adamez M."/>
            <person name="Welten M.C.M."/>
            <person name="Spaink H.P."/>
            <person name="Jeffery J.E."/>
            <person name="Schoon R.T."/>
            <person name="de Bakker M.A.G."/>
            <person name="Bagowski C.P."/>
            <person name="Meijer A.H."/>
            <person name="Verbeek F.J."/>
            <person name="Richardson M.K."/>
        </authorList>
    </citation>
    <scope>NUCLEOTIDE SEQUENCE [MRNA] OF 97-227</scope>
    <source>
        <strain>Tuebingen</strain>
    </source>
</reference>
<reference key="4">
    <citation type="journal article" date="1998" name="Development">
        <title>Zebrafish hox genes: genomic organization and modified colinear expression patterns in the trunk.</title>
        <authorList>
            <person name="Prince V.E."/>
            <person name="Joly L."/>
            <person name="Ekker M."/>
            <person name="Ho R.K."/>
        </authorList>
    </citation>
    <scope>NUCLEOTIDE SEQUENCE [MRNA] OF 221-260</scope>
    <scope>DEVELOPMENTAL STAGE</scope>
    <source>
        <tissue>Embryo</tissue>
    </source>
</reference>
<evidence type="ECO:0000250" key="1"/>
<evidence type="ECO:0000255" key="2">
    <source>
        <dbReference type="PROSITE-ProRule" id="PRU00108"/>
    </source>
</evidence>
<evidence type="ECO:0000256" key="3">
    <source>
        <dbReference type="SAM" id="MobiDB-lite"/>
    </source>
</evidence>
<evidence type="ECO:0000269" key="4">
    <source>
    </source>
</evidence>
<evidence type="ECO:0000305" key="5"/>